<reference key="1">
    <citation type="journal article" date="1992" name="Plant Mol. Biol.">
        <title>Nucleotide sequence of the rice (Oryza sativa) Em protein gene (Emp1).</title>
        <authorList>
            <person name="Litts J.C."/>
            <person name="Erdman M.B."/>
            <person name="Huang N."/>
            <person name="Karrer E.E."/>
            <person name="Noueiry A."/>
            <person name="Quatrano R.S."/>
            <person name="Rodriguez R.L."/>
        </authorList>
    </citation>
    <scope>NUCLEOTIDE SEQUENCE [GENOMIC DNA]</scope>
    <source>
        <strain>cv. M202</strain>
    </source>
</reference>
<reference key="2">
    <citation type="journal article" date="1995" name="Plant J.">
        <title>Regulation of the Osem gene by abscisic acid and the transcriptional activator VP1: analysis of cis-acting promoter elements required for regulation by abscisic acid and VP1.</title>
        <authorList>
            <person name="Hattori T."/>
            <person name="Terada T."/>
            <person name="Hamasuna S."/>
        </authorList>
    </citation>
    <scope>NUCLEOTIDE SEQUENCE [GENOMIC DNA]</scope>
    <source>
        <strain>cv. Nipponbare</strain>
    </source>
</reference>
<reference key="3">
    <citation type="journal article" date="2005" name="Mol. Genet. Genomics">
        <title>A fine physical map of the rice chromosome 5.</title>
        <authorList>
            <person name="Cheng C.-H."/>
            <person name="Chung M.C."/>
            <person name="Liu S.-M."/>
            <person name="Chen S.-K."/>
            <person name="Kao F.Y."/>
            <person name="Lin S.-J."/>
            <person name="Hsiao S.-H."/>
            <person name="Tseng I.C."/>
            <person name="Hsing Y.-I.C."/>
            <person name="Wu H.-P."/>
            <person name="Chen C.-S."/>
            <person name="Shaw J.-F."/>
            <person name="Wu J."/>
            <person name="Matsumoto T."/>
            <person name="Sasaki T."/>
            <person name="Chen H.-C."/>
            <person name="Chow T.-Y."/>
        </authorList>
    </citation>
    <scope>NUCLEOTIDE SEQUENCE [LARGE SCALE GENOMIC DNA]</scope>
    <source>
        <strain>cv. Nipponbare</strain>
    </source>
</reference>
<reference key="4">
    <citation type="journal article" date="2005" name="Nature">
        <title>The map-based sequence of the rice genome.</title>
        <authorList>
            <consortium name="International rice genome sequencing project (IRGSP)"/>
        </authorList>
    </citation>
    <scope>NUCLEOTIDE SEQUENCE [LARGE SCALE GENOMIC DNA]</scope>
    <source>
        <strain>cv. Nipponbare</strain>
    </source>
</reference>
<reference key="5">
    <citation type="journal article" date="2008" name="Nucleic Acids Res.">
        <title>The rice annotation project database (RAP-DB): 2008 update.</title>
        <authorList>
            <consortium name="The rice annotation project (RAP)"/>
        </authorList>
    </citation>
    <scope>GENOME REANNOTATION</scope>
    <source>
        <strain>cv. Nipponbare</strain>
    </source>
</reference>
<reference key="6">
    <citation type="journal article" date="2013" name="Rice">
        <title>Improvement of the Oryza sativa Nipponbare reference genome using next generation sequence and optical map data.</title>
        <authorList>
            <person name="Kawahara Y."/>
            <person name="de la Bastide M."/>
            <person name="Hamilton J.P."/>
            <person name="Kanamori H."/>
            <person name="McCombie W.R."/>
            <person name="Ouyang S."/>
            <person name="Schwartz D.C."/>
            <person name="Tanaka T."/>
            <person name="Wu J."/>
            <person name="Zhou S."/>
            <person name="Childs K.L."/>
            <person name="Davidson R.M."/>
            <person name="Lin H."/>
            <person name="Quesada-Ocampo L."/>
            <person name="Vaillancourt B."/>
            <person name="Sakai H."/>
            <person name="Lee S.S."/>
            <person name="Kim J."/>
            <person name="Numa H."/>
            <person name="Itoh T."/>
            <person name="Buell C.R."/>
            <person name="Matsumoto T."/>
        </authorList>
    </citation>
    <scope>GENOME REANNOTATION</scope>
    <source>
        <strain>cv. Nipponbare</strain>
    </source>
</reference>
<reference key="7">
    <citation type="journal article" date="2005" name="PLoS Biol.">
        <title>The genomes of Oryza sativa: a history of duplications.</title>
        <authorList>
            <person name="Yu J."/>
            <person name="Wang J."/>
            <person name="Lin W."/>
            <person name="Li S."/>
            <person name="Li H."/>
            <person name="Zhou J."/>
            <person name="Ni P."/>
            <person name="Dong W."/>
            <person name="Hu S."/>
            <person name="Zeng C."/>
            <person name="Zhang J."/>
            <person name="Zhang Y."/>
            <person name="Li R."/>
            <person name="Xu Z."/>
            <person name="Li S."/>
            <person name="Li X."/>
            <person name="Zheng H."/>
            <person name="Cong L."/>
            <person name="Lin L."/>
            <person name="Yin J."/>
            <person name="Geng J."/>
            <person name="Li G."/>
            <person name="Shi J."/>
            <person name="Liu J."/>
            <person name="Lv H."/>
            <person name="Li J."/>
            <person name="Wang J."/>
            <person name="Deng Y."/>
            <person name="Ran L."/>
            <person name="Shi X."/>
            <person name="Wang X."/>
            <person name="Wu Q."/>
            <person name="Li C."/>
            <person name="Ren X."/>
            <person name="Wang J."/>
            <person name="Wang X."/>
            <person name="Li D."/>
            <person name="Liu D."/>
            <person name="Zhang X."/>
            <person name="Ji Z."/>
            <person name="Zhao W."/>
            <person name="Sun Y."/>
            <person name="Zhang Z."/>
            <person name="Bao J."/>
            <person name="Han Y."/>
            <person name="Dong L."/>
            <person name="Ji J."/>
            <person name="Chen P."/>
            <person name="Wu S."/>
            <person name="Liu J."/>
            <person name="Xiao Y."/>
            <person name="Bu D."/>
            <person name="Tan J."/>
            <person name="Yang L."/>
            <person name="Ye C."/>
            <person name="Zhang J."/>
            <person name="Xu J."/>
            <person name="Zhou Y."/>
            <person name="Yu Y."/>
            <person name="Zhang B."/>
            <person name="Zhuang S."/>
            <person name="Wei H."/>
            <person name="Liu B."/>
            <person name="Lei M."/>
            <person name="Yu H."/>
            <person name="Li Y."/>
            <person name="Xu H."/>
            <person name="Wei S."/>
            <person name="He X."/>
            <person name="Fang L."/>
            <person name="Zhang Z."/>
            <person name="Zhang Y."/>
            <person name="Huang X."/>
            <person name="Su Z."/>
            <person name="Tong W."/>
            <person name="Li J."/>
            <person name="Tong Z."/>
            <person name="Li S."/>
            <person name="Ye J."/>
            <person name="Wang L."/>
            <person name="Fang L."/>
            <person name="Lei T."/>
            <person name="Chen C.-S."/>
            <person name="Chen H.-C."/>
            <person name="Xu Z."/>
            <person name="Li H."/>
            <person name="Huang H."/>
            <person name="Zhang F."/>
            <person name="Xu H."/>
            <person name="Li N."/>
            <person name="Zhao C."/>
            <person name="Li S."/>
            <person name="Dong L."/>
            <person name="Huang Y."/>
            <person name="Li L."/>
            <person name="Xi Y."/>
            <person name="Qi Q."/>
            <person name="Li W."/>
            <person name="Zhang B."/>
            <person name="Hu W."/>
            <person name="Zhang Y."/>
            <person name="Tian X."/>
            <person name="Jiao Y."/>
            <person name="Liang X."/>
            <person name="Jin J."/>
            <person name="Gao L."/>
            <person name="Zheng W."/>
            <person name="Hao B."/>
            <person name="Liu S.-M."/>
            <person name="Wang W."/>
            <person name="Yuan L."/>
            <person name="Cao M."/>
            <person name="McDermott J."/>
            <person name="Samudrala R."/>
            <person name="Wang J."/>
            <person name="Wong G.K.-S."/>
            <person name="Yang H."/>
        </authorList>
    </citation>
    <scope>NUCLEOTIDE SEQUENCE [LARGE SCALE GENOMIC DNA]</scope>
    <source>
        <strain>cv. Nipponbare</strain>
    </source>
</reference>
<reference key="8">
    <citation type="journal article" date="2003" name="Science">
        <title>Collection, mapping, and annotation of over 28,000 cDNA clones from japonica rice.</title>
        <authorList>
            <consortium name="The rice full-length cDNA consortium"/>
        </authorList>
    </citation>
    <scope>NUCLEOTIDE SEQUENCE [LARGE SCALE MRNA]</scope>
    <source>
        <strain>cv. Nipponbare</strain>
    </source>
</reference>
<comment type="function">
    <text>Em protein may act as a cytoplasm protectant during desiccation.</text>
</comment>
<comment type="tissue specificity">
    <text>Expressed in dry seeds and immature embryos.</text>
</comment>
<comment type="induction">
    <text>By abscisic acid (ABA).</text>
</comment>
<comment type="miscellaneous">
    <text>The induction of Em proteins by abscisic acid may be mediated by the cis-element, termed the ABA-responsive element (ABRE), which binds a Leucine-zipper protein, Em bp1.</text>
</comment>
<comment type="similarity">
    <text evidence="2">Belongs to the small hydrophilic plant seed protein family.</text>
</comment>
<evidence type="ECO:0000256" key="1">
    <source>
        <dbReference type="SAM" id="MobiDB-lite"/>
    </source>
</evidence>
<evidence type="ECO:0000305" key="2"/>
<evidence type="ECO:0000312" key="3">
    <source>
        <dbReference type="EMBL" id="EEE63356.1"/>
    </source>
</evidence>
<gene>
    <name type="primary">EMP1</name>
    <name type="synonym">EM</name>
    <name type="ordered locus">Os05g0349800</name>
    <name type="ordered locus">LOC_Os05g28210</name>
    <name evidence="3" type="ORF">OsJ_18167</name>
    <name type="ORF">OSJNBa0077J17.4</name>
</gene>
<dbReference type="EMBL" id="X63126">
    <property type="protein sequence ID" value="CAA44836.1"/>
    <property type="molecule type" value="Genomic_DNA"/>
</dbReference>
<dbReference type="EMBL" id="U22102">
    <property type="protein sequence ID" value="AAA81015.1"/>
    <property type="molecule type" value="Genomic_DNA"/>
</dbReference>
<dbReference type="EMBL" id="AC136221">
    <property type="protein sequence ID" value="AAV44066.1"/>
    <property type="molecule type" value="Genomic_DNA"/>
</dbReference>
<dbReference type="EMBL" id="AP008211">
    <property type="protein sequence ID" value="BAF17187.1"/>
    <property type="molecule type" value="Genomic_DNA"/>
</dbReference>
<dbReference type="EMBL" id="AP014961">
    <property type="protein sequence ID" value="BAS93528.1"/>
    <property type="molecule type" value="Genomic_DNA"/>
</dbReference>
<dbReference type="EMBL" id="CM000142">
    <property type="protein sequence ID" value="EEE63356.1"/>
    <property type="molecule type" value="Genomic_DNA"/>
</dbReference>
<dbReference type="EMBL" id="AK063677">
    <property type="protein sequence ID" value="BAG88819.1"/>
    <property type="molecule type" value="mRNA"/>
</dbReference>
<dbReference type="PIR" id="S22483">
    <property type="entry name" value="S22483"/>
</dbReference>
<dbReference type="RefSeq" id="XP_015638049.1">
    <property type="nucleotide sequence ID" value="XM_015782563.1"/>
</dbReference>
<dbReference type="FunCoup" id="P46520">
    <property type="interactions" value="2605"/>
</dbReference>
<dbReference type="STRING" id="39947.P46520"/>
<dbReference type="PaxDb" id="39947-P46520"/>
<dbReference type="EnsemblPlants" id="Os05t0349800-01">
    <property type="protein sequence ID" value="Os05t0349800-01"/>
    <property type="gene ID" value="Os05g0349800"/>
</dbReference>
<dbReference type="Gramene" id="Os05t0349800-01">
    <property type="protein sequence ID" value="Os05t0349800-01"/>
    <property type="gene ID" value="Os05g0349800"/>
</dbReference>
<dbReference type="KEGG" id="dosa:Os05g0349800"/>
<dbReference type="eggNOG" id="ENOG502S40U">
    <property type="taxonomic scope" value="Eukaryota"/>
</dbReference>
<dbReference type="HOGENOM" id="CLU_144393_0_0_1"/>
<dbReference type="InParanoid" id="P46520"/>
<dbReference type="OMA" id="RHEGYSE"/>
<dbReference type="OrthoDB" id="540492at2759"/>
<dbReference type="Proteomes" id="UP000000763">
    <property type="component" value="Chromosome 5"/>
</dbReference>
<dbReference type="Proteomes" id="UP000007752">
    <property type="component" value="Chromosome 5"/>
</dbReference>
<dbReference type="Proteomes" id="UP000059680">
    <property type="component" value="Chromosome 5"/>
</dbReference>
<dbReference type="ExpressionAtlas" id="P46520">
    <property type="expression patterns" value="baseline and differential"/>
</dbReference>
<dbReference type="GO" id="GO:0009737">
    <property type="term" value="P:response to abscisic acid"/>
    <property type="evidence" value="ECO:0000270"/>
    <property type="project" value="Gramene"/>
</dbReference>
<dbReference type="InterPro" id="IPR038956">
    <property type="entry name" value="LEA_5"/>
</dbReference>
<dbReference type="InterPro" id="IPR022377">
    <property type="entry name" value="Sm_Hydphi_plant_seed_CS"/>
</dbReference>
<dbReference type="InterPro" id="IPR000389">
    <property type="entry name" value="Small_hydrophilic_seed_prot"/>
</dbReference>
<dbReference type="PANTHER" id="PTHR34671">
    <property type="entry name" value="EM-LIKE PROTEIN GEA1"/>
    <property type="match status" value="1"/>
</dbReference>
<dbReference type="PANTHER" id="PTHR34671:SF19">
    <property type="entry name" value="EMBRYONIC ABUNDANT PROTEIN 1"/>
    <property type="match status" value="1"/>
</dbReference>
<dbReference type="Pfam" id="PF00477">
    <property type="entry name" value="LEA_5"/>
    <property type="match status" value="1"/>
</dbReference>
<dbReference type="PROSITE" id="PS00431">
    <property type="entry name" value="SMALL_HYDR_PLANT_SEED"/>
    <property type="match status" value="1"/>
</dbReference>
<feature type="chain" id="PRO_0000185686" description="Embryonic abundant protein 1">
    <location>
        <begin position="1"/>
        <end position="95"/>
    </location>
</feature>
<feature type="region of interest" description="Disordered" evidence="1">
    <location>
        <begin position="1"/>
        <end position="95"/>
    </location>
</feature>
<feature type="compositionally biased region" description="Polar residues" evidence="1">
    <location>
        <begin position="1"/>
        <end position="10"/>
    </location>
</feature>
<feature type="compositionally biased region" description="Basic and acidic residues" evidence="1">
    <location>
        <begin position="40"/>
        <end position="64"/>
    </location>
</feature>
<feature type="compositionally biased region" description="Basic and acidic residues" evidence="1">
    <location>
        <begin position="75"/>
        <end position="95"/>
    </location>
</feature>
<keyword id="KW-1185">Reference proteome</keyword>
<organism>
    <name type="scientific">Oryza sativa subsp. japonica</name>
    <name type="common">Rice</name>
    <dbReference type="NCBI Taxonomy" id="39947"/>
    <lineage>
        <taxon>Eukaryota</taxon>
        <taxon>Viridiplantae</taxon>
        <taxon>Streptophyta</taxon>
        <taxon>Embryophyta</taxon>
        <taxon>Tracheophyta</taxon>
        <taxon>Spermatophyta</taxon>
        <taxon>Magnoliopsida</taxon>
        <taxon>Liliopsida</taxon>
        <taxon>Poales</taxon>
        <taxon>Poaceae</taxon>
        <taxon>BOP clade</taxon>
        <taxon>Oryzoideae</taxon>
        <taxon>Oryzeae</taxon>
        <taxon>Oryzinae</taxon>
        <taxon>Oryza</taxon>
        <taxon>Oryza sativa</taxon>
    </lineage>
</organism>
<proteinExistence type="evidence at transcript level"/>
<accession>P46520</accession>
<accession>Q0DIY6</accession>
<accession>Q5W6H4</accession>
<sequence length="95" mass="10165">MASGQQQQGRSELDRMAREGQTVVPGGTGGKSLEAQENLAEGRSRGGQTRKEQMGEEGYREMGRKGGLSTGDESGGERAAREGIDIDESKYKTKS</sequence>
<protein>
    <recommendedName>
        <fullName>Embryonic abundant protein 1</fullName>
    </recommendedName>
</protein>
<name>EMP1_ORYSJ</name>